<feature type="chain" id="PRO_1000204956" description="Chorismate synthase">
    <location>
        <begin position="1"/>
        <end position="361"/>
    </location>
</feature>
<feature type="binding site" evidence="1">
    <location>
        <position position="48"/>
    </location>
    <ligand>
        <name>NADP(+)</name>
        <dbReference type="ChEBI" id="CHEBI:58349"/>
    </ligand>
</feature>
<feature type="binding site" evidence="1">
    <location>
        <position position="54"/>
    </location>
    <ligand>
        <name>NADP(+)</name>
        <dbReference type="ChEBI" id="CHEBI:58349"/>
    </ligand>
</feature>
<feature type="binding site" evidence="1">
    <location>
        <begin position="125"/>
        <end position="127"/>
    </location>
    <ligand>
        <name>FMN</name>
        <dbReference type="ChEBI" id="CHEBI:58210"/>
    </ligand>
</feature>
<feature type="binding site" evidence="1">
    <location>
        <begin position="238"/>
        <end position="239"/>
    </location>
    <ligand>
        <name>FMN</name>
        <dbReference type="ChEBI" id="CHEBI:58210"/>
    </ligand>
</feature>
<feature type="binding site" evidence="1">
    <location>
        <position position="278"/>
    </location>
    <ligand>
        <name>FMN</name>
        <dbReference type="ChEBI" id="CHEBI:58210"/>
    </ligand>
</feature>
<feature type="binding site" evidence="1">
    <location>
        <begin position="293"/>
        <end position="297"/>
    </location>
    <ligand>
        <name>FMN</name>
        <dbReference type="ChEBI" id="CHEBI:58210"/>
    </ligand>
</feature>
<feature type="binding site" evidence="1">
    <location>
        <position position="319"/>
    </location>
    <ligand>
        <name>FMN</name>
        <dbReference type="ChEBI" id="CHEBI:58210"/>
    </ligand>
</feature>
<protein>
    <recommendedName>
        <fullName evidence="1">Chorismate synthase</fullName>
        <shortName evidence="1">CS</shortName>
        <ecNumber evidence="1">4.2.3.5</ecNumber>
    </recommendedName>
    <alternativeName>
        <fullName evidence="1">5-enolpyruvylshikimate-3-phosphate phospholyase</fullName>
    </alternativeName>
</protein>
<sequence length="361" mass="39177">MAGNSIGQFFRVTTFGESHGIALGCIVDGVPPGIPLTEADLQHDLDRRRPGTSRYTTQRREPDQVKILSGVFEGVTTGTSIGLLIENTDQRSQDYSAIKDVFRPGHADYTYEQKYGLRDYRGGGRSSARETAMRVAAGAIAKKYLQQQYGVKVRGYLSQIGDVTCELKDWDQVEQNPFFCPDVDKLEALDELMRALKKEGDSIGAKVSVVAESVPAGLGEPVFDRLDADLAHALMSINAVKGVEIGDGFAVVTKRGSENRDEITPDGFQSNHAGGILGGISSGQHIVAHLALKPTSSIMVPGKTINRQGEATEMVTRGRHDPCVGIRAVPIAEAMMAIVLMDHLLRQRAQCGDVNSQVPRW</sequence>
<dbReference type="EC" id="4.2.3.5" evidence="1"/>
<dbReference type="EMBL" id="CP001657">
    <property type="protein sequence ID" value="ACT13841.1"/>
    <property type="molecule type" value="Genomic_DNA"/>
</dbReference>
<dbReference type="RefSeq" id="WP_015841002.1">
    <property type="nucleotide sequence ID" value="NC_012917.1"/>
</dbReference>
<dbReference type="SMR" id="C6DA85"/>
<dbReference type="STRING" id="561230.PC1_2811"/>
<dbReference type="GeneID" id="67793304"/>
<dbReference type="KEGG" id="pct:PC1_2811"/>
<dbReference type="eggNOG" id="COG0082">
    <property type="taxonomic scope" value="Bacteria"/>
</dbReference>
<dbReference type="HOGENOM" id="CLU_034547_0_2_6"/>
<dbReference type="OrthoDB" id="9771806at2"/>
<dbReference type="UniPathway" id="UPA00053">
    <property type="reaction ID" value="UER00090"/>
</dbReference>
<dbReference type="Proteomes" id="UP000002736">
    <property type="component" value="Chromosome"/>
</dbReference>
<dbReference type="GO" id="GO:0005829">
    <property type="term" value="C:cytosol"/>
    <property type="evidence" value="ECO:0007669"/>
    <property type="project" value="TreeGrafter"/>
</dbReference>
<dbReference type="GO" id="GO:0004107">
    <property type="term" value="F:chorismate synthase activity"/>
    <property type="evidence" value="ECO:0007669"/>
    <property type="project" value="UniProtKB-UniRule"/>
</dbReference>
<dbReference type="GO" id="GO:0010181">
    <property type="term" value="F:FMN binding"/>
    <property type="evidence" value="ECO:0007669"/>
    <property type="project" value="TreeGrafter"/>
</dbReference>
<dbReference type="GO" id="GO:0008652">
    <property type="term" value="P:amino acid biosynthetic process"/>
    <property type="evidence" value="ECO:0007669"/>
    <property type="project" value="UniProtKB-KW"/>
</dbReference>
<dbReference type="GO" id="GO:0009073">
    <property type="term" value="P:aromatic amino acid family biosynthetic process"/>
    <property type="evidence" value="ECO:0007669"/>
    <property type="project" value="UniProtKB-KW"/>
</dbReference>
<dbReference type="GO" id="GO:0009423">
    <property type="term" value="P:chorismate biosynthetic process"/>
    <property type="evidence" value="ECO:0007669"/>
    <property type="project" value="UniProtKB-UniRule"/>
</dbReference>
<dbReference type="CDD" id="cd07304">
    <property type="entry name" value="Chorismate_synthase"/>
    <property type="match status" value="1"/>
</dbReference>
<dbReference type="FunFam" id="3.60.150.10:FF:000001">
    <property type="entry name" value="Chorismate synthase"/>
    <property type="match status" value="1"/>
</dbReference>
<dbReference type="Gene3D" id="3.60.150.10">
    <property type="entry name" value="Chorismate synthase AroC"/>
    <property type="match status" value="1"/>
</dbReference>
<dbReference type="HAMAP" id="MF_00300">
    <property type="entry name" value="Chorismate_synth"/>
    <property type="match status" value="1"/>
</dbReference>
<dbReference type="InterPro" id="IPR000453">
    <property type="entry name" value="Chorismate_synth"/>
</dbReference>
<dbReference type="InterPro" id="IPR035904">
    <property type="entry name" value="Chorismate_synth_AroC_sf"/>
</dbReference>
<dbReference type="InterPro" id="IPR020541">
    <property type="entry name" value="Chorismate_synthase_CS"/>
</dbReference>
<dbReference type="NCBIfam" id="TIGR00033">
    <property type="entry name" value="aroC"/>
    <property type="match status" value="1"/>
</dbReference>
<dbReference type="NCBIfam" id="NF003793">
    <property type="entry name" value="PRK05382.1"/>
    <property type="match status" value="1"/>
</dbReference>
<dbReference type="PANTHER" id="PTHR21085">
    <property type="entry name" value="CHORISMATE SYNTHASE"/>
    <property type="match status" value="1"/>
</dbReference>
<dbReference type="PANTHER" id="PTHR21085:SF0">
    <property type="entry name" value="CHORISMATE SYNTHASE"/>
    <property type="match status" value="1"/>
</dbReference>
<dbReference type="Pfam" id="PF01264">
    <property type="entry name" value="Chorismate_synt"/>
    <property type="match status" value="1"/>
</dbReference>
<dbReference type="PIRSF" id="PIRSF001456">
    <property type="entry name" value="Chorismate_synth"/>
    <property type="match status" value="1"/>
</dbReference>
<dbReference type="SUPFAM" id="SSF103263">
    <property type="entry name" value="Chorismate synthase, AroC"/>
    <property type="match status" value="1"/>
</dbReference>
<dbReference type="PROSITE" id="PS00787">
    <property type="entry name" value="CHORISMATE_SYNTHASE_1"/>
    <property type="match status" value="1"/>
</dbReference>
<dbReference type="PROSITE" id="PS00788">
    <property type="entry name" value="CHORISMATE_SYNTHASE_2"/>
    <property type="match status" value="1"/>
</dbReference>
<dbReference type="PROSITE" id="PS00789">
    <property type="entry name" value="CHORISMATE_SYNTHASE_3"/>
    <property type="match status" value="1"/>
</dbReference>
<reference key="1">
    <citation type="submission" date="2009-07" db="EMBL/GenBank/DDBJ databases">
        <title>Complete sequence of Pectobacterium carotovorum subsp. carotovorum PC1.</title>
        <authorList>
            <consortium name="US DOE Joint Genome Institute"/>
            <person name="Lucas S."/>
            <person name="Copeland A."/>
            <person name="Lapidus A."/>
            <person name="Glavina del Rio T."/>
            <person name="Tice H."/>
            <person name="Bruce D."/>
            <person name="Goodwin L."/>
            <person name="Pitluck S."/>
            <person name="Munk A.C."/>
            <person name="Brettin T."/>
            <person name="Detter J.C."/>
            <person name="Han C."/>
            <person name="Tapia R."/>
            <person name="Larimer F."/>
            <person name="Land M."/>
            <person name="Hauser L."/>
            <person name="Kyrpides N."/>
            <person name="Mikhailova N."/>
            <person name="Balakrishnan V."/>
            <person name="Glasner J."/>
            <person name="Perna N.T."/>
        </authorList>
    </citation>
    <scope>NUCLEOTIDE SEQUENCE [LARGE SCALE GENOMIC DNA]</scope>
    <source>
        <strain>PC1</strain>
    </source>
</reference>
<accession>C6DA85</accession>
<organism>
    <name type="scientific">Pectobacterium carotovorum subsp. carotovorum (strain PC1)</name>
    <dbReference type="NCBI Taxonomy" id="561230"/>
    <lineage>
        <taxon>Bacteria</taxon>
        <taxon>Pseudomonadati</taxon>
        <taxon>Pseudomonadota</taxon>
        <taxon>Gammaproteobacteria</taxon>
        <taxon>Enterobacterales</taxon>
        <taxon>Pectobacteriaceae</taxon>
        <taxon>Pectobacterium</taxon>
    </lineage>
</organism>
<gene>
    <name evidence="1" type="primary">aroC</name>
    <name type="ordered locus">PC1_2811</name>
</gene>
<keyword id="KW-0028">Amino-acid biosynthesis</keyword>
<keyword id="KW-0057">Aromatic amino acid biosynthesis</keyword>
<keyword id="KW-0274">FAD</keyword>
<keyword id="KW-0285">Flavoprotein</keyword>
<keyword id="KW-0288">FMN</keyword>
<keyword id="KW-0456">Lyase</keyword>
<keyword id="KW-0521">NADP</keyword>
<name>AROC_PECCP</name>
<proteinExistence type="inferred from homology"/>
<comment type="function">
    <text evidence="1">Catalyzes the anti-1,4-elimination of the C-3 phosphate and the C-6 proR hydrogen from 5-enolpyruvylshikimate-3-phosphate (EPSP) to yield chorismate, which is the branch point compound that serves as the starting substrate for the three terminal pathways of aromatic amino acid biosynthesis. This reaction introduces a second double bond into the aromatic ring system.</text>
</comment>
<comment type="catalytic activity">
    <reaction evidence="1">
        <text>5-O-(1-carboxyvinyl)-3-phosphoshikimate = chorismate + phosphate</text>
        <dbReference type="Rhea" id="RHEA:21020"/>
        <dbReference type="ChEBI" id="CHEBI:29748"/>
        <dbReference type="ChEBI" id="CHEBI:43474"/>
        <dbReference type="ChEBI" id="CHEBI:57701"/>
        <dbReference type="EC" id="4.2.3.5"/>
    </reaction>
</comment>
<comment type="cofactor">
    <cofactor evidence="1">
        <name>FMNH2</name>
        <dbReference type="ChEBI" id="CHEBI:57618"/>
    </cofactor>
    <text evidence="1">Reduced FMN (FMNH(2)).</text>
</comment>
<comment type="pathway">
    <text evidence="1">Metabolic intermediate biosynthesis; chorismate biosynthesis; chorismate from D-erythrose 4-phosphate and phosphoenolpyruvate: step 7/7.</text>
</comment>
<comment type="subunit">
    <text evidence="1">Homotetramer.</text>
</comment>
<comment type="similarity">
    <text evidence="1">Belongs to the chorismate synthase family.</text>
</comment>
<evidence type="ECO:0000255" key="1">
    <source>
        <dbReference type="HAMAP-Rule" id="MF_00300"/>
    </source>
</evidence>